<evidence type="ECO:0000255" key="1">
    <source>
        <dbReference type="HAMAP-Rule" id="MF_00229"/>
    </source>
</evidence>
<comment type="catalytic activity">
    <reaction evidence="1">
        <text>L-histidine = trans-urocanate + NH4(+)</text>
        <dbReference type="Rhea" id="RHEA:21232"/>
        <dbReference type="ChEBI" id="CHEBI:17771"/>
        <dbReference type="ChEBI" id="CHEBI:28938"/>
        <dbReference type="ChEBI" id="CHEBI:57595"/>
        <dbReference type="EC" id="4.3.1.3"/>
    </reaction>
</comment>
<comment type="pathway">
    <text evidence="1">Amino-acid degradation; L-histidine degradation into L-glutamate; N-formimidoyl-L-glutamate from L-histidine: step 1/3.</text>
</comment>
<comment type="subcellular location">
    <subcellularLocation>
        <location evidence="1">Cytoplasm</location>
    </subcellularLocation>
</comment>
<comment type="PTM">
    <text evidence="1">Contains an active site 4-methylidene-imidazol-5-one (MIO), which is formed autocatalytically by cyclization and dehydration of residues Ala-Ser-Gly.</text>
</comment>
<comment type="similarity">
    <text evidence="1">Belongs to the PAL/histidase family.</text>
</comment>
<accession>P58083</accession>
<accession>Q48W80</accession>
<dbReference type="EC" id="4.3.1.3" evidence="1"/>
<dbReference type="EMBL" id="AE004092">
    <property type="protein sequence ID" value="AAK34741.1"/>
    <property type="molecule type" value="Genomic_DNA"/>
</dbReference>
<dbReference type="EMBL" id="CP000017">
    <property type="protein sequence ID" value="AAZ52395.1"/>
    <property type="molecule type" value="Genomic_DNA"/>
</dbReference>
<dbReference type="RefSeq" id="NP_270020.1">
    <property type="nucleotide sequence ID" value="NC_002737.2"/>
</dbReference>
<dbReference type="SMR" id="P58083"/>
<dbReference type="PaxDb" id="1314-HKU360_01890"/>
<dbReference type="KEGG" id="spy:SPy_2089"/>
<dbReference type="KEGG" id="spz:M5005_Spy1777"/>
<dbReference type="PATRIC" id="fig|160490.10.peg.1810"/>
<dbReference type="HOGENOM" id="CLU_014801_4_0_9"/>
<dbReference type="OMA" id="YSLRCMP"/>
<dbReference type="UniPathway" id="UPA00379">
    <property type="reaction ID" value="UER00549"/>
</dbReference>
<dbReference type="Proteomes" id="UP000000750">
    <property type="component" value="Chromosome"/>
</dbReference>
<dbReference type="GO" id="GO:0005737">
    <property type="term" value="C:cytoplasm"/>
    <property type="evidence" value="ECO:0007669"/>
    <property type="project" value="UniProtKB-SubCell"/>
</dbReference>
<dbReference type="GO" id="GO:0004397">
    <property type="term" value="F:histidine ammonia-lyase activity"/>
    <property type="evidence" value="ECO:0007669"/>
    <property type="project" value="UniProtKB-UniRule"/>
</dbReference>
<dbReference type="GO" id="GO:0019556">
    <property type="term" value="P:L-histidine catabolic process to glutamate and formamide"/>
    <property type="evidence" value="ECO:0007669"/>
    <property type="project" value="UniProtKB-UniPathway"/>
</dbReference>
<dbReference type="GO" id="GO:0019557">
    <property type="term" value="P:L-histidine catabolic process to glutamate and formate"/>
    <property type="evidence" value="ECO:0007669"/>
    <property type="project" value="UniProtKB-UniPathway"/>
</dbReference>
<dbReference type="CDD" id="cd00332">
    <property type="entry name" value="PAL-HAL"/>
    <property type="match status" value="1"/>
</dbReference>
<dbReference type="FunFam" id="1.10.275.10:FF:000005">
    <property type="entry name" value="Histidine ammonia-lyase"/>
    <property type="match status" value="1"/>
</dbReference>
<dbReference type="FunFam" id="1.20.200.10:FF:000003">
    <property type="entry name" value="Histidine ammonia-lyase"/>
    <property type="match status" value="1"/>
</dbReference>
<dbReference type="Gene3D" id="1.20.200.10">
    <property type="entry name" value="Fumarase/aspartase (Central domain)"/>
    <property type="match status" value="1"/>
</dbReference>
<dbReference type="Gene3D" id="1.10.275.10">
    <property type="entry name" value="Fumarase/aspartase (N-terminal domain)"/>
    <property type="match status" value="1"/>
</dbReference>
<dbReference type="HAMAP" id="MF_00229">
    <property type="entry name" value="His_ammonia_lyase"/>
    <property type="match status" value="1"/>
</dbReference>
<dbReference type="InterPro" id="IPR001106">
    <property type="entry name" value="Aromatic_Lyase"/>
</dbReference>
<dbReference type="InterPro" id="IPR024083">
    <property type="entry name" value="Fumarase/histidase_N"/>
</dbReference>
<dbReference type="InterPro" id="IPR005921">
    <property type="entry name" value="HutH"/>
</dbReference>
<dbReference type="InterPro" id="IPR008948">
    <property type="entry name" value="L-Aspartase-like"/>
</dbReference>
<dbReference type="InterPro" id="IPR022313">
    <property type="entry name" value="Phe/His_NH3-lyase_AS"/>
</dbReference>
<dbReference type="NCBIfam" id="TIGR01225">
    <property type="entry name" value="hutH"/>
    <property type="match status" value="1"/>
</dbReference>
<dbReference type="NCBIfam" id="NF006871">
    <property type="entry name" value="PRK09367.1"/>
    <property type="match status" value="1"/>
</dbReference>
<dbReference type="PANTHER" id="PTHR10362">
    <property type="entry name" value="HISTIDINE AMMONIA-LYASE"/>
    <property type="match status" value="1"/>
</dbReference>
<dbReference type="Pfam" id="PF00221">
    <property type="entry name" value="Lyase_aromatic"/>
    <property type="match status" value="1"/>
</dbReference>
<dbReference type="SUPFAM" id="SSF48557">
    <property type="entry name" value="L-aspartase-like"/>
    <property type="match status" value="1"/>
</dbReference>
<dbReference type="PROSITE" id="PS00488">
    <property type="entry name" value="PAL_HISTIDASE"/>
    <property type="match status" value="1"/>
</dbReference>
<proteinExistence type="inferred from homology"/>
<organism>
    <name type="scientific">Streptococcus pyogenes serotype M1</name>
    <dbReference type="NCBI Taxonomy" id="301447"/>
    <lineage>
        <taxon>Bacteria</taxon>
        <taxon>Bacillati</taxon>
        <taxon>Bacillota</taxon>
        <taxon>Bacilli</taxon>
        <taxon>Lactobacillales</taxon>
        <taxon>Streptococcaceae</taxon>
        <taxon>Streptococcus</taxon>
    </lineage>
</organism>
<sequence length="513" mass="55429">MTRVINLDGESLTIEDVIAIARQGVACHIDDSAIEAVNASRKIVDDIVSEKRVVYGVTTGFGSLCNVSISPEDTVQLQENLIRTHASGFGDPLPEDAVRAIMLIRINSLVKGYSGIRLSTIEKLLELLNKGVHPYIPEKGSLGASGDLAPLAHMVLPMLGLGKAYYKGELLSGQEALDKAGIDKISLAAKEGLALINGTTVLTAVGALATYDAIQLLKLSDLAGALSLEVHNGITSPFEENLHTIRPQSGQLATARNIRNLLEGSQNTTVATQSRVQDPYTLRCMPQIHGASKDSIAYVKSKVDIEINSVTDNPIICKDGHVISGGNFHGEPMAQPFDFLGIAISEIGNVSERRVERLVNSQLSKLPSFLVKYPGLNSGFMITQYACASLASENKVLAHPASVDSIPSCENQEDFVSMGTTAARKAFEILKNSRRIVATEIMAACQALDLKPENHELGKGTKVAYDLFRKEVNFIEHDKHIEIYDELNKASAVIEDPSFLEAVEQAVELSIQF</sequence>
<reference key="1">
    <citation type="journal article" date="2001" name="Proc. Natl. Acad. Sci. U.S.A.">
        <title>Complete genome sequence of an M1 strain of Streptococcus pyogenes.</title>
        <authorList>
            <person name="Ferretti J.J."/>
            <person name="McShan W.M."/>
            <person name="Ajdic D.J."/>
            <person name="Savic D.J."/>
            <person name="Savic G."/>
            <person name="Lyon K."/>
            <person name="Primeaux C."/>
            <person name="Sezate S."/>
            <person name="Suvorov A.N."/>
            <person name="Kenton S."/>
            <person name="Lai H.S."/>
            <person name="Lin S.P."/>
            <person name="Qian Y."/>
            <person name="Jia H.G."/>
            <person name="Najar F.Z."/>
            <person name="Ren Q."/>
            <person name="Zhu H."/>
            <person name="Song L."/>
            <person name="White J."/>
            <person name="Yuan X."/>
            <person name="Clifton S.W."/>
            <person name="Roe B.A."/>
            <person name="McLaughlin R.E."/>
        </authorList>
    </citation>
    <scope>NUCLEOTIDE SEQUENCE [LARGE SCALE GENOMIC DNA]</scope>
    <source>
        <strain>ATCC 700294 / SF370 / Serotype M1</strain>
    </source>
</reference>
<reference key="2">
    <citation type="journal article" date="2005" name="J. Infect. Dis.">
        <title>Evolutionary origin and emergence of a highly successful clone of serotype M1 group A Streptococcus involved multiple horizontal gene transfer events.</title>
        <authorList>
            <person name="Sumby P."/>
            <person name="Porcella S.F."/>
            <person name="Madrigal A.G."/>
            <person name="Barbian K.D."/>
            <person name="Virtaneva K."/>
            <person name="Ricklefs S.M."/>
            <person name="Sturdevant D.E."/>
            <person name="Graham M.R."/>
            <person name="Vuopio-Varkila J."/>
            <person name="Hoe N.P."/>
            <person name="Musser J.M."/>
        </authorList>
    </citation>
    <scope>NUCLEOTIDE SEQUENCE [LARGE SCALE GENOMIC DNA]</scope>
    <source>
        <strain>ATCC BAA-947 / MGAS5005 / Serotype M1</strain>
    </source>
</reference>
<name>HUTH_STRP1</name>
<keyword id="KW-0963">Cytoplasm</keyword>
<keyword id="KW-0369">Histidine metabolism</keyword>
<keyword id="KW-0456">Lyase</keyword>
<keyword id="KW-1185">Reference proteome</keyword>
<feature type="chain" id="PRO_0000161039" description="Histidine ammonia-lyase">
    <location>
        <begin position="1"/>
        <end position="513"/>
    </location>
</feature>
<feature type="modified residue" description="2,3-didehydroalanine (Ser)" evidence="1">
    <location>
        <position position="145"/>
    </location>
</feature>
<feature type="cross-link" description="5-imidazolinone (Ala-Gly)" evidence="1">
    <location>
        <begin position="144"/>
        <end position="146"/>
    </location>
</feature>
<gene>
    <name evidence="1" type="primary">hutH</name>
    <name type="ordered locus">SPy_2089</name>
    <name type="ordered locus">M5005_Spy1777</name>
</gene>
<protein>
    <recommendedName>
        <fullName evidence="1">Histidine ammonia-lyase</fullName>
        <shortName evidence="1">Histidase</shortName>
        <ecNumber evidence="1">4.3.1.3</ecNumber>
    </recommendedName>
</protein>